<feature type="chain" id="PRO_0000091480" description="Eukaryotic peptide chain release factor GTP-binding subunit ERF3A">
    <location>
        <begin position="1"/>
        <end position="499"/>
    </location>
</feature>
<feature type="domain" description="tr-type G" evidence="3">
    <location>
        <begin position="72"/>
        <end position="298"/>
    </location>
</feature>
<feature type="region of interest" description="Disordered" evidence="4">
    <location>
        <begin position="1"/>
        <end position="69"/>
    </location>
</feature>
<feature type="region of interest" description="G1" evidence="3">
    <location>
        <begin position="81"/>
        <end position="88"/>
    </location>
</feature>
<feature type="region of interest" description="G2" evidence="3">
    <location>
        <begin position="137"/>
        <end position="141"/>
    </location>
</feature>
<feature type="region of interest" description="G3" evidence="3">
    <location>
        <begin position="158"/>
        <end position="161"/>
    </location>
</feature>
<feature type="region of interest" description="G4" evidence="3">
    <location>
        <begin position="220"/>
        <end position="223"/>
    </location>
</feature>
<feature type="region of interest" description="G5" evidence="3">
    <location>
        <begin position="262"/>
        <end position="264"/>
    </location>
</feature>
<feature type="compositionally biased region" description="Basic and acidic residues" evidence="4">
    <location>
        <begin position="41"/>
        <end position="50"/>
    </location>
</feature>
<feature type="binding site" evidence="1">
    <location>
        <begin position="84"/>
        <end position="89"/>
    </location>
    <ligand>
        <name>GTP</name>
        <dbReference type="ChEBI" id="CHEBI:37565"/>
    </ligand>
</feature>
<feature type="binding site" evidence="1">
    <location>
        <begin position="220"/>
        <end position="223"/>
    </location>
    <ligand>
        <name>GTP</name>
        <dbReference type="ChEBI" id="CHEBI:37565"/>
    </ligand>
</feature>
<feature type="binding site" evidence="1">
    <location>
        <begin position="262"/>
        <end position="264"/>
    </location>
    <ligand>
        <name>GTP</name>
        <dbReference type="ChEBI" id="CHEBI:37565"/>
    </ligand>
</feature>
<feature type="splice variant" id="VSP_042198" description="In isoform 2 and isoform 3." evidence="13">
    <original>M</original>
    <variation>MDPGSGGGGGGGGGGGSSSGSSSSDSAPDCWDQADMEAPGPGPCGGGGSLAAAAEAQRENLSAAFSRQLNVNAKPFVPNVHAAEFVPSFLRGPAAPPPPVGGAANNHGAGSGAGGRAAPVESSQEEQSLCEGSNSAVSM</variation>
    <location>
        <position position="1"/>
    </location>
</feature>
<feature type="splice variant" id="VSP_042199" description="In isoform 2." evidence="13">
    <location>
        <position position="8"/>
    </location>
</feature>
<feature type="sequence conflict" description="In Ref. 4; AAH09503." evidence="14" ref="4">
    <original>GGGG</original>
    <variation>G</variation>
    <location sequence="P15170-2">
        <begin position="6"/>
        <end position="9"/>
    </location>
</feature>
<feature type="sequence conflict" description="In Ref. 4; AAH09503." evidence="14" ref="4">
    <original>G</original>
    <variation>C</variation>
    <location sequence="P15170-2">
        <position position="92"/>
    </location>
</feature>
<feature type="sequence conflict" description="In Ref. 4; AAH09503." evidence="14" ref="4">
    <original>V</original>
    <variation>A</variation>
    <location sequence="P15170-2">
        <position position="100"/>
    </location>
</feature>
<keyword id="KW-0002">3D-structure</keyword>
<keyword id="KW-0025">Alternative splicing</keyword>
<keyword id="KW-0342">GTP-binding</keyword>
<keyword id="KW-0378">Hydrolase</keyword>
<keyword id="KW-0866">Nonsense-mediated mRNA decay</keyword>
<keyword id="KW-0547">Nucleotide-binding</keyword>
<keyword id="KW-0648">Protein biosynthesis</keyword>
<keyword id="KW-1267">Proteomics identification</keyword>
<keyword id="KW-1185">Reference proteome</keyword>
<organism>
    <name type="scientific">Homo sapiens</name>
    <name type="common">Human</name>
    <dbReference type="NCBI Taxonomy" id="9606"/>
    <lineage>
        <taxon>Eukaryota</taxon>
        <taxon>Metazoa</taxon>
        <taxon>Chordata</taxon>
        <taxon>Craniata</taxon>
        <taxon>Vertebrata</taxon>
        <taxon>Euteleostomi</taxon>
        <taxon>Mammalia</taxon>
        <taxon>Eutheria</taxon>
        <taxon>Euarchontoglires</taxon>
        <taxon>Primates</taxon>
        <taxon>Haplorrhini</taxon>
        <taxon>Catarrhini</taxon>
        <taxon>Hominidae</taxon>
        <taxon>Homo</taxon>
    </lineage>
</organism>
<protein>
    <recommendedName>
        <fullName>Eukaryotic peptide chain release factor GTP-binding subunit ERF3A</fullName>
        <shortName>Eukaryotic peptide chain release factor subunit 3a</shortName>
        <shortName>eRF3a</shortName>
        <ecNumber evidence="6 15">3.6.5.-</ecNumber>
    </recommendedName>
    <alternativeName>
        <fullName>G1 to S phase transition protein 1 homolog</fullName>
    </alternativeName>
</protein>
<gene>
    <name type="primary">GSPT1</name>
    <name type="synonym">ERF3A</name>
</gene>
<comment type="function">
    <text evidence="5 6 8 9 10 11 12">GTPase component of the eRF1-eRF3-GTP ternary complex, a ternary complex that mediates translation termination in response to the termination codons UAA, UAG and UGA (PubMed:15987998, PubMed:19417105, PubMed:2511002, PubMed:27863242). GSPT1/ERF3A mediates ETF1/ERF1 delivery to stop codons: The eRF1-eRF3-GTP complex binds to a stop codon in the ribosomal A-site (PubMed:27863242). GTP hydrolysis by GSPT1/ERF3A induces a conformational change that leads to its dissociation, permitting ETF1/ERF1 to accommodate fully in the A-site (PubMed:16777602, PubMed:27863242). Component of the transient SURF complex which recruits UPF1 to stalled ribosomes in the context of nonsense-mediated decay (NMD) of mRNAs containing premature stop codons (PubMed:24486019). Required for SHFL-mediated translation termination which inhibits programmed ribosomal frameshifting (-1PRF) of mRNA from viruses and cellular genes (PubMed:30682371).</text>
</comment>
<comment type="catalytic activity">
    <reaction evidence="6 15">
        <text>GTP + H2O = GDP + phosphate + H(+)</text>
        <dbReference type="Rhea" id="RHEA:19669"/>
        <dbReference type="ChEBI" id="CHEBI:15377"/>
        <dbReference type="ChEBI" id="CHEBI:15378"/>
        <dbReference type="ChEBI" id="CHEBI:37565"/>
        <dbReference type="ChEBI" id="CHEBI:43474"/>
        <dbReference type="ChEBI" id="CHEBI:58189"/>
    </reaction>
    <physiologicalReaction direction="left-to-right" evidence="15">
        <dbReference type="Rhea" id="RHEA:19670"/>
    </physiologicalReaction>
</comment>
<comment type="subunit">
    <text evidence="2 7 8 9 11 12">Component of the eRF1-eRF3-GTP ternary complex, composed of ETF1/ERF1 and ERF3 (GSPT1/ERF3A or GSPT2/ERF3B) and GTP (PubMed:19417105, PubMed:27863242). Component of the transient SURF (SMG1-UPF1-eRF1-eRF3) complex (PubMed:19417104). The ETF1-GSPT1 complex interacts with JMJD4 (PubMed:24486019). Interacts with PABPC1 (By similarity). Interacts with SHFL (PubMed:30682371).</text>
</comment>
<comment type="interaction">
    <interactant intactId="EBI-948993">
        <id>P15170</id>
    </interactant>
    <interactant intactId="EBI-750990">
        <id>P62495</id>
        <label>ETF1</label>
    </interactant>
    <organismsDiffer>false</organismsDiffer>
    <experiments>5</experiments>
</comment>
<comment type="interaction">
    <interactant intactId="EBI-948993">
        <id>P15170</id>
    </interactant>
    <interactant intactId="EBI-81531">
        <id>P11940</id>
        <label>PABPC1</label>
    </interactant>
    <organismsDiffer>false</organismsDiffer>
    <experiments>2</experiments>
</comment>
<comment type="interaction">
    <interactant intactId="EBI-948993">
        <id>P15170</id>
    </interactant>
    <interactant intactId="EBI-373471">
        <id>Q92900</id>
        <label>UPF1</label>
    </interactant>
    <organismsDiffer>false</organismsDiffer>
    <experiments>3</experiments>
</comment>
<comment type="interaction">
    <interactant intactId="EBI-9094806">
        <id>P15170-2</id>
    </interactant>
    <interactant intactId="EBI-81531">
        <id>P11940</id>
        <label>PABPC1</label>
    </interactant>
    <organismsDiffer>false</organismsDiffer>
    <experiments>2</experiments>
</comment>
<comment type="alternative products">
    <event type="alternative splicing"/>
    <isoform>
        <id>P15170-1</id>
        <name>1</name>
        <sequence type="displayed"/>
    </isoform>
    <isoform>
        <id>P15170-2</id>
        <name>2</name>
        <sequence type="described" ref="VSP_042198 VSP_042199"/>
    </isoform>
    <isoform>
        <id>P15170-3</id>
        <name>3</name>
        <sequence type="described" ref="VSP_042198"/>
    </isoform>
</comment>
<comment type="similarity">
    <text evidence="3">Belongs to the TRAFAC class translation factor GTPase superfamily. Classic translation factor GTPase family. ERF3 subfamily.</text>
</comment>
<comment type="caution">
    <text evidence="14">eRF3 antibodies used in PubMed:19417104 do not differentiate between GSPT1/ERF3A and GSPT2/ERF3B.</text>
</comment>
<evidence type="ECO:0000250" key="1">
    <source>
        <dbReference type="UniProtKB" id="O74718"/>
    </source>
</evidence>
<evidence type="ECO:0000250" key="2">
    <source>
        <dbReference type="UniProtKB" id="Q8R050"/>
    </source>
</evidence>
<evidence type="ECO:0000255" key="3">
    <source>
        <dbReference type="PROSITE-ProRule" id="PRU01059"/>
    </source>
</evidence>
<evidence type="ECO:0000256" key="4">
    <source>
        <dbReference type="SAM" id="MobiDB-lite"/>
    </source>
</evidence>
<evidence type="ECO:0000269" key="5">
    <source>
    </source>
</evidence>
<evidence type="ECO:0000269" key="6">
    <source>
    </source>
</evidence>
<evidence type="ECO:0000269" key="7">
    <source>
    </source>
</evidence>
<evidence type="ECO:0000269" key="8">
    <source>
    </source>
</evidence>
<evidence type="ECO:0000269" key="9">
    <source>
    </source>
</evidence>
<evidence type="ECO:0000269" key="10">
    <source>
    </source>
</evidence>
<evidence type="ECO:0000269" key="11">
    <source>
    </source>
</evidence>
<evidence type="ECO:0000269" key="12">
    <source>
    </source>
</evidence>
<evidence type="ECO:0000303" key="13">
    <source>
    </source>
</evidence>
<evidence type="ECO:0000305" key="14"/>
<evidence type="ECO:0000305" key="15">
    <source>
    </source>
</evidence>
<evidence type="ECO:0007744" key="16">
    <source>
        <dbReference type="PDB" id="3E1Y"/>
    </source>
</evidence>
<evidence type="ECO:0007744" key="17">
    <source>
        <dbReference type="PDB" id="5LZT"/>
    </source>
</evidence>
<sequence length="499" mass="55756">MELSEPIVENGETEMSPEESWEHKEEISEAEPGGGSLGDGRPPEESAHEMMEEEEEIPKPKSVVAPPGAPKKEHVNVVFIGHVDAGKSTIGGQIMYLTGMVDKRTLEKYEREAKEKNRETWYLSWALDTNQEERDKGKTVEVGRAYFETEKKHFTILDAPGHKSFVPNMIGGASQADLAVLVISARKGEFETGFEKGGQTREHAMLAKTAGVKHLIVLINKMDDPTVNWSNERYEECKEKLVPFLKKVGFNPKKDIHFMPCSGLTGANLKEQSDFCPWYIGLPFIPYLDNLPNFNRSVDGPIRLPIVDKYKDMGTVVLGKLESGSICKGQQLVMMPNKHNVEVLGILSDDVETDTVAPGENLKIRLKGIEEEEILPGFILCDPNNLCHSGRTFDAQIVIIEHKSIICPGYNAVLHIHTCIEEVEITALICLVDKKSGEKSKTRPRFVKQDQVCIARLRTAGTICLETFKDFPQMGRFTLRDEGKTIAIGKVLKLVPEKD</sequence>
<reference key="1">
    <citation type="journal article" date="1989" name="EMBO J.">
        <title>A human homologue of the yeast GST1 gene codes for a GTP-binding protein and is expressed in a proliferation-dependent manner in mammalian cells.</title>
        <authorList>
            <person name="Hoshino S."/>
            <person name="Miyazawa H."/>
            <person name="Enomoto T."/>
            <person name="Hanaoka F."/>
            <person name="Kikuchi Y."/>
            <person name="Kikuchi A."/>
            <person name="Ui M."/>
        </authorList>
    </citation>
    <scope>NUCLEOTIDE SEQUENCE [MRNA] (ISOFORM 1)</scope>
</reference>
<reference key="2">
    <citation type="journal article" date="1999" name="Genomics">
        <title>Genome duplications and other features in 12 Mb of DNA sequence from human chromosome 16p and 16q.</title>
        <authorList>
            <person name="Loftus B.J."/>
            <person name="Kim U.-J."/>
            <person name="Sneddon V.P."/>
            <person name="Kalush F."/>
            <person name="Brandon R."/>
            <person name="Fuhrmann J."/>
            <person name="Mason T."/>
            <person name="Crosby M.L."/>
            <person name="Barnstead M."/>
            <person name="Cronin L."/>
            <person name="Mays A.D."/>
            <person name="Cao Y."/>
            <person name="Xu R.X."/>
            <person name="Kang H.-L."/>
            <person name="Mitchell S."/>
            <person name="Eichler E.E."/>
            <person name="Harris P.C."/>
            <person name="Venter J.C."/>
            <person name="Adams M.D."/>
        </authorList>
    </citation>
    <scope>NUCLEOTIDE SEQUENCE [LARGE SCALE GENOMIC DNA]</scope>
</reference>
<reference key="3">
    <citation type="journal article" date="2004" name="Nature">
        <title>The sequence and analysis of duplication-rich human chromosome 16.</title>
        <authorList>
            <person name="Martin J."/>
            <person name="Han C."/>
            <person name="Gordon L.A."/>
            <person name="Terry A."/>
            <person name="Prabhakar S."/>
            <person name="She X."/>
            <person name="Xie G."/>
            <person name="Hellsten U."/>
            <person name="Chan Y.M."/>
            <person name="Altherr M."/>
            <person name="Couronne O."/>
            <person name="Aerts A."/>
            <person name="Bajorek E."/>
            <person name="Black S."/>
            <person name="Blumer H."/>
            <person name="Branscomb E."/>
            <person name="Brown N.C."/>
            <person name="Bruno W.J."/>
            <person name="Buckingham J.M."/>
            <person name="Callen D.F."/>
            <person name="Campbell C.S."/>
            <person name="Campbell M.L."/>
            <person name="Campbell E.W."/>
            <person name="Caoile C."/>
            <person name="Challacombe J.F."/>
            <person name="Chasteen L.A."/>
            <person name="Chertkov O."/>
            <person name="Chi H.C."/>
            <person name="Christensen M."/>
            <person name="Clark L.M."/>
            <person name="Cohn J.D."/>
            <person name="Denys M."/>
            <person name="Detter J.C."/>
            <person name="Dickson M."/>
            <person name="Dimitrijevic-Bussod M."/>
            <person name="Escobar J."/>
            <person name="Fawcett J.J."/>
            <person name="Flowers D."/>
            <person name="Fotopulos D."/>
            <person name="Glavina T."/>
            <person name="Gomez M."/>
            <person name="Gonzales E."/>
            <person name="Goodstein D."/>
            <person name="Goodwin L.A."/>
            <person name="Grady D.L."/>
            <person name="Grigoriev I."/>
            <person name="Groza M."/>
            <person name="Hammon N."/>
            <person name="Hawkins T."/>
            <person name="Haydu L."/>
            <person name="Hildebrand C.E."/>
            <person name="Huang W."/>
            <person name="Israni S."/>
            <person name="Jett J."/>
            <person name="Jewett P.B."/>
            <person name="Kadner K."/>
            <person name="Kimball H."/>
            <person name="Kobayashi A."/>
            <person name="Krawczyk M.-C."/>
            <person name="Leyba T."/>
            <person name="Longmire J.L."/>
            <person name="Lopez F."/>
            <person name="Lou Y."/>
            <person name="Lowry S."/>
            <person name="Ludeman T."/>
            <person name="Manohar C.F."/>
            <person name="Mark G.A."/>
            <person name="McMurray K.L."/>
            <person name="Meincke L.J."/>
            <person name="Morgan J."/>
            <person name="Moyzis R.K."/>
            <person name="Mundt M.O."/>
            <person name="Munk A.C."/>
            <person name="Nandkeshwar R.D."/>
            <person name="Pitluck S."/>
            <person name="Pollard M."/>
            <person name="Predki P."/>
            <person name="Parson-Quintana B."/>
            <person name="Ramirez L."/>
            <person name="Rash S."/>
            <person name="Retterer J."/>
            <person name="Ricke D.O."/>
            <person name="Robinson D.L."/>
            <person name="Rodriguez A."/>
            <person name="Salamov A."/>
            <person name="Saunders E.H."/>
            <person name="Scott D."/>
            <person name="Shough T."/>
            <person name="Stallings R.L."/>
            <person name="Stalvey M."/>
            <person name="Sutherland R.D."/>
            <person name="Tapia R."/>
            <person name="Tesmer J.G."/>
            <person name="Thayer N."/>
            <person name="Thompson L.S."/>
            <person name="Tice H."/>
            <person name="Torney D.C."/>
            <person name="Tran-Gyamfi M."/>
            <person name="Tsai M."/>
            <person name="Ulanovsky L.E."/>
            <person name="Ustaszewska A."/>
            <person name="Vo N."/>
            <person name="White P.S."/>
            <person name="Williams A.L."/>
            <person name="Wills P.L."/>
            <person name="Wu J.-R."/>
            <person name="Wu K."/>
            <person name="Yang J."/>
            <person name="DeJong P."/>
            <person name="Bruce D."/>
            <person name="Doggett N.A."/>
            <person name="Deaven L."/>
            <person name="Schmutz J."/>
            <person name="Grimwood J."/>
            <person name="Richardson P."/>
            <person name="Rokhsar D.S."/>
            <person name="Eichler E.E."/>
            <person name="Gilna P."/>
            <person name="Lucas S.M."/>
            <person name="Myers R.M."/>
            <person name="Rubin E.M."/>
            <person name="Pennacchio L.A."/>
        </authorList>
    </citation>
    <scope>NUCLEOTIDE SEQUENCE [LARGE SCALE GENOMIC DNA]</scope>
</reference>
<reference key="4">
    <citation type="journal article" date="2004" name="Genome Res.">
        <title>The status, quality, and expansion of the NIH full-length cDNA project: the Mammalian Gene Collection (MGC).</title>
        <authorList>
            <consortium name="The MGC Project Team"/>
        </authorList>
    </citation>
    <scope>NUCLEOTIDE SEQUENCE [LARGE SCALE MRNA] (ISOFORM 2)</scope>
    <source>
        <tissue>Lung</tissue>
    </source>
</reference>
<reference key="5">
    <citation type="journal article" date="2005" name="Mol. Cell. Biol.">
        <title>Involvement of human release factors eRF3a and eRF3b in translation termination and regulation of the termination complex formation.</title>
        <authorList>
            <person name="Chauvin C."/>
            <person name="Salhi S."/>
            <person name="Le Goff C."/>
            <person name="Viranaicken W."/>
            <person name="Diop D."/>
            <person name="Jean-Jean O."/>
        </authorList>
    </citation>
    <scope>FUNCTION</scope>
    <scope>CATALYTIC ACTIVITY</scope>
</reference>
<reference key="6">
    <citation type="journal article" date="2006" name="Cell">
        <title>In vitro reconstitution of eukaryotic translation reveals cooperativity between release factors eRF1 and eRF3.</title>
        <authorList>
            <person name="Alkalaeva E.Z."/>
            <person name="Pisarev A.V."/>
            <person name="Frolova L.Y."/>
            <person name="Kisselev L.L."/>
            <person name="Pestova T.V."/>
        </authorList>
    </citation>
    <scope>FUNCTION</scope>
    <scope>CATALYTIC ACTIVITY</scope>
</reference>
<reference key="7">
    <citation type="journal article" date="2009" name="Genes Dev.">
        <title>SMG-8 and SMG-9, two novel subunits of the SMG-1 complex, regulate remodeling of the mRNA surveillance complex during nonsense-mediated mRNA decay.</title>
        <authorList>
            <person name="Yamashita A."/>
            <person name="Izumi N."/>
            <person name="Kashima I."/>
            <person name="Ohnishi T."/>
            <person name="Saari B."/>
            <person name="Katsuhata Y."/>
            <person name="Muramatsu R."/>
            <person name="Morita T."/>
            <person name="Iwamatsu A."/>
            <person name="Hachiya T."/>
            <person name="Kurata R."/>
            <person name="Hirano H."/>
            <person name="Anderson P."/>
            <person name="Ohno S."/>
        </authorList>
    </citation>
    <scope>IDENTIFICATION IN THE SURF COMPLEX</scope>
    <scope>FUNCTION</scope>
</reference>
<reference key="8">
    <citation type="journal article" date="2011" name="BMC Syst. Biol.">
        <title>Initial characterization of the human central proteome.</title>
        <authorList>
            <person name="Burkard T.R."/>
            <person name="Planyavsky M."/>
            <person name="Kaupe I."/>
            <person name="Breitwieser F.P."/>
            <person name="Buerckstuemmer T."/>
            <person name="Bennett K.L."/>
            <person name="Superti-Furga G."/>
            <person name="Colinge J."/>
        </authorList>
    </citation>
    <scope>IDENTIFICATION BY MASS SPECTROMETRY [LARGE SCALE ANALYSIS]</scope>
</reference>
<reference key="9">
    <citation type="journal article" date="2014" name="Mol. Cell">
        <title>Optimal translational termination requires C4 lysyl hydroxylation of eRF1.</title>
        <authorList>
            <person name="Feng T."/>
            <person name="Yamamoto A."/>
            <person name="Wilkins S.E."/>
            <person name="Sokolova E."/>
            <person name="Yates L.A."/>
            <person name="Muenzel M."/>
            <person name="Singh P."/>
            <person name="Hopkinson R.J."/>
            <person name="Fischer R."/>
            <person name="Cockman M.E."/>
            <person name="Shelley J."/>
            <person name="Trudgian D.C."/>
            <person name="Schoedel J."/>
            <person name="McCullagh J.S."/>
            <person name="Ge W."/>
            <person name="Kessler B.M."/>
            <person name="Gilbert R.J."/>
            <person name="Frolova L.Y."/>
            <person name="Alkalaeva E."/>
            <person name="Ratcliffe P.J."/>
            <person name="Schofield C.J."/>
            <person name="Coleman M.L."/>
        </authorList>
    </citation>
    <scope>INTERACTION WITH JMJD4</scope>
</reference>
<reference key="10">
    <citation type="journal article" date="2019" name="Cell">
        <title>Regulation of HIV-1 Gag-Pol Expression by Shiftless, an Inhibitor of Programmed -1 Ribosomal Frameshifting.</title>
        <authorList>
            <person name="Wang X."/>
            <person name="Xuan Y."/>
            <person name="Han Y."/>
            <person name="Ding X."/>
            <person name="Ye K."/>
            <person name="Yang F."/>
            <person name="Gao P."/>
            <person name="Goff S.P."/>
            <person name="Gao G."/>
        </authorList>
    </citation>
    <scope>FUNCTION</scope>
    <scope>INTERACTION WITH SHFL</scope>
</reference>
<reference evidence="16" key="11">
    <citation type="journal article" date="2009" name="Genes Dev.">
        <title>Structural insights into eRF3 and stop codon recognition by eRF1.</title>
        <authorList>
            <person name="Cheng Z."/>
            <person name="Saito K."/>
            <person name="Pisarev A.V."/>
            <person name="Wada M."/>
            <person name="Pisareva V.P."/>
            <person name="Pestova T.V."/>
            <person name="Gajda M."/>
            <person name="Round A."/>
            <person name="Kong C."/>
            <person name="Lim M."/>
            <person name="Nakamura Y."/>
            <person name="Svergun D.I."/>
            <person name="Ito K."/>
            <person name="Song H."/>
        </authorList>
    </citation>
    <scope>X-RAY CRYSTALLOGRAPHY (3.80 ANGSTROMS) OF 301-499 IN COMPLEX WITH ETF1</scope>
    <scope>FUNCTION</scope>
    <scope>IDENTIFICATION IN THE ERF1-ERF3-GTP TERNARY COMPLEX</scope>
</reference>
<reference key="12">
    <citation type="journal article" date="2010" name="PLoS ONE">
        <title>Molecular basis of eRF3 recognition by the MLLE domain of poly(A)-binding protein.</title>
        <authorList>
            <person name="Kozlov G."/>
            <person name="Gehring K."/>
        </authorList>
    </citation>
    <scope>X-RAY CRYSTALLOGRAPHY (1.40 ANGSTROMS) OF 73-87 (ISOFORM 2)</scope>
</reference>
<reference evidence="17" key="13">
    <citation type="journal article" date="2016" name="Cell">
        <title>Decoding mammalian ribosome-mRNA states by translational GTPase complexes.</title>
        <authorList>
            <person name="Shao S."/>
            <person name="Murray J."/>
            <person name="Brown A."/>
            <person name="Taunton J."/>
            <person name="Ramakrishnan V."/>
            <person name="Hegde R.S."/>
        </authorList>
    </citation>
    <scope>STRUCTURE BY ELECTRON MICROSCOPY (3.65 ANGSTROMS) IN COMPLEX WITH ETF1/ERF1 AND RIBOSOME</scope>
    <scope>FUNCTION</scope>
    <scope>IDENTIFICATION IN THE ERF1-ERF3-GTP TERNARY COMPLEX</scope>
</reference>
<accession>P15170</accession>
<accession>J3KQG6</accession>
<accession>Q96GF2</accession>
<proteinExistence type="evidence at protein level"/>
<name>ERF3A_HUMAN</name>
<dbReference type="EC" id="3.6.5.-" evidence="6 15"/>
<dbReference type="EMBL" id="X17644">
    <property type="protein sequence ID" value="CAA35635.1"/>
    <property type="molecule type" value="mRNA"/>
</dbReference>
<dbReference type="EMBL" id="U95742">
    <property type="protein sequence ID" value="AAB67250.1"/>
    <property type="molecule type" value="Genomic_DNA"/>
</dbReference>
<dbReference type="EMBL" id="AC007216">
    <property type="status" value="NOT_ANNOTATED_CDS"/>
    <property type="molecule type" value="Genomic_DNA"/>
</dbReference>
<dbReference type="EMBL" id="BC009503">
    <property type="protein sequence ID" value="AAH09503.2"/>
    <property type="molecule type" value="mRNA"/>
</dbReference>
<dbReference type="CCDS" id="CCDS45412.1">
    <molecule id="P15170-3"/>
</dbReference>
<dbReference type="CCDS" id="CCDS45413.1">
    <molecule id="P15170-2"/>
</dbReference>
<dbReference type="CCDS" id="CCDS45414.1">
    <molecule id="P15170-1"/>
</dbReference>
<dbReference type="PIR" id="S06941">
    <property type="entry name" value="S06941"/>
</dbReference>
<dbReference type="RefSeq" id="NP_001123478.2">
    <molecule id="P15170-2"/>
    <property type="nucleotide sequence ID" value="NM_001130006.2"/>
</dbReference>
<dbReference type="RefSeq" id="NP_001123479.1">
    <molecule id="P15170-1"/>
    <property type="nucleotide sequence ID" value="NM_001130007.2"/>
</dbReference>
<dbReference type="RefSeq" id="NP_002085.3">
    <molecule id="P15170-3"/>
    <property type="nucleotide sequence ID" value="NM_002094.4"/>
</dbReference>
<dbReference type="PDB" id="3E1Y">
    <property type="method" value="X-ray"/>
    <property type="resolution" value="3.80 A"/>
    <property type="chains" value="E/F/G/H=301-499"/>
</dbReference>
<dbReference type="PDB" id="3J5Y">
    <property type="method" value="EM"/>
    <property type="resolution" value="9.70 A"/>
    <property type="chains" value="B=69-496"/>
</dbReference>
<dbReference type="PDB" id="3KUI">
    <property type="method" value="X-ray"/>
    <property type="resolution" value="2.30 A"/>
    <property type="chains" value="B=64-78"/>
</dbReference>
<dbReference type="PDB" id="4D61">
    <property type="method" value="EM"/>
    <property type="resolution" value="9.00 A"/>
    <property type="chains" value="i=72-497"/>
</dbReference>
<dbReference type="PDB" id="5HXB">
    <property type="method" value="X-ray"/>
    <property type="resolution" value="3.60 A"/>
    <property type="chains" value="A/X=300-496"/>
</dbReference>
<dbReference type="PDB" id="5LZT">
    <property type="method" value="EM"/>
    <property type="resolution" value="3.65 A"/>
    <property type="chains" value="jj=1-499"/>
</dbReference>
<dbReference type="PDB" id="6XK9">
    <property type="method" value="X-ray"/>
    <property type="resolution" value="3.64 A"/>
    <property type="chains" value="A/X=300-496"/>
</dbReference>
<dbReference type="PDBsum" id="3E1Y"/>
<dbReference type="PDBsum" id="3J5Y"/>
<dbReference type="PDBsum" id="3KUI"/>
<dbReference type="PDBsum" id="4D61"/>
<dbReference type="PDBsum" id="5HXB"/>
<dbReference type="PDBsum" id="5LZT"/>
<dbReference type="PDBsum" id="6XK9"/>
<dbReference type="EMDB" id="EMD-4131"/>
<dbReference type="EMDB" id="EMD-5801"/>
<dbReference type="SMR" id="P15170"/>
<dbReference type="BioGRID" id="109190">
    <property type="interactions" value="311"/>
</dbReference>
<dbReference type="ComplexPortal" id="CPX-2721">
    <property type="entry name" value="ERF1-ERF3 translation release factor complex, GSPT1 variant"/>
</dbReference>
<dbReference type="CORUM" id="P15170"/>
<dbReference type="FunCoup" id="P15170">
    <property type="interactions" value="2319"/>
</dbReference>
<dbReference type="IntAct" id="P15170">
    <property type="interactions" value="170"/>
</dbReference>
<dbReference type="MINT" id="P15170"/>
<dbReference type="STRING" id="9606.ENSP00000398131"/>
<dbReference type="BindingDB" id="P15170"/>
<dbReference type="ChEMBL" id="CHEMBL4523593"/>
<dbReference type="DrugBank" id="DB04315">
    <property type="generic name" value="Guanosine-5'-Diphosphate"/>
</dbReference>
<dbReference type="GlyGen" id="P15170">
    <property type="glycosylation" value="1 site, 1 O-linked glycan (1 site)"/>
</dbReference>
<dbReference type="iPTMnet" id="P15170"/>
<dbReference type="MetOSite" id="P15170"/>
<dbReference type="PhosphoSitePlus" id="P15170"/>
<dbReference type="SwissPalm" id="P15170"/>
<dbReference type="BioMuta" id="GSPT1"/>
<dbReference type="DMDM" id="121688"/>
<dbReference type="jPOST" id="P15170"/>
<dbReference type="MassIVE" id="P15170"/>
<dbReference type="PaxDb" id="9606-ENSP00000398131"/>
<dbReference type="PeptideAtlas" id="P15170"/>
<dbReference type="ProteomicsDB" id="53116">
    <molecule id="P15170-1"/>
</dbReference>
<dbReference type="ProteomicsDB" id="53117">
    <molecule id="P15170-2"/>
</dbReference>
<dbReference type="Pumba" id="P15170"/>
<dbReference type="Antibodypedia" id="24757">
    <property type="antibodies" value="174 antibodies from 31 providers"/>
</dbReference>
<dbReference type="DNASU" id="2935"/>
<dbReference type="Ensembl" id="ENST00000420576.6">
    <molecule id="P15170-1"/>
    <property type="protein sequence ID" value="ENSP00000399539.2"/>
    <property type="gene ID" value="ENSG00000103342.13"/>
</dbReference>
<dbReference type="Ensembl" id="ENST00000434724.7">
    <molecule id="P15170-3"/>
    <property type="protein sequence ID" value="ENSP00000398131.2"/>
    <property type="gene ID" value="ENSG00000103342.13"/>
</dbReference>
<dbReference type="Ensembl" id="ENST00000439887.6">
    <molecule id="P15170-2"/>
    <property type="protein sequence ID" value="ENSP00000408399.2"/>
    <property type="gene ID" value="ENSG00000103342.13"/>
</dbReference>
<dbReference type="Ensembl" id="ENST00000563468.5">
    <molecule id="P15170-1"/>
    <property type="protein sequence ID" value="ENSP00000454351.1"/>
    <property type="gene ID" value="ENSG00000103342.13"/>
</dbReference>
<dbReference type="GeneID" id="2935"/>
<dbReference type="KEGG" id="hsa:2935"/>
<dbReference type="MANE-Select" id="ENST00000434724.7">
    <molecule id="P15170-3"/>
    <property type="protein sequence ID" value="ENSP00000398131.2"/>
    <property type="RefSeq nucleotide sequence ID" value="NM_002094.4"/>
    <property type="RefSeq protein sequence ID" value="NP_002085.3"/>
</dbReference>
<dbReference type="UCSC" id="uc002dbt.4">
    <molecule id="P15170-1"/>
    <property type="organism name" value="human"/>
</dbReference>
<dbReference type="AGR" id="HGNC:4621"/>
<dbReference type="CTD" id="2935"/>
<dbReference type="DisGeNET" id="2935"/>
<dbReference type="GeneCards" id="GSPT1"/>
<dbReference type="HGNC" id="HGNC:4621">
    <property type="gene designation" value="GSPT1"/>
</dbReference>
<dbReference type="HPA" id="ENSG00000103342">
    <property type="expression patterns" value="Low tissue specificity"/>
</dbReference>
<dbReference type="MIM" id="139259">
    <property type="type" value="gene"/>
</dbReference>
<dbReference type="neXtProt" id="NX_P15170"/>
<dbReference type="OpenTargets" id="ENSG00000103342"/>
<dbReference type="PharmGKB" id="PA29012"/>
<dbReference type="VEuPathDB" id="HostDB:ENSG00000103342"/>
<dbReference type="eggNOG" id="KOG0459">
    <property type="taxonomic scope" value="Eukaryota"/>
</dbReference>
<dbReference type="GeneTree" id="ENSGT00940000155582"/>
<dbReference type="HOGENOM" id="CLU_007265_3_8_1"/>
<dbReference type="InParanoid" id="P15170"/>
<dbReference type="OMA" id="DLCWFDD"/>
<dbReference type="OrthoDB" id="342024at2759"/>
<dbReference type="PAN-GO" id="P15170">
    <property type="GO annotations" value="4 GO annotations based on evolutionary models"/>
</dbReference>
<dbReference type="PhylomeDB" id="P15170"/>
<dbReference type="TreeFam" id="TF300566"/>
<dbReference type="PathwayCommons" id="P15170"/>
<dbReference type="Reactome" id="R-HSA-72764">
    <property type="pathway name" value="Eukaryotic Translation Termination"/>
</dbReference>
<dbReference type="Reactome" id="R-HSA-9010553">
    <property type="pathway name" value="Regulation of expression of SLITs and ROBOs"/>
</dbReference>
<dbReference type="Reactome" id="R-HSA-975956">
    <property type="pathway name" value="Nonsense Mediated Decay (NMD) independent of the Exon Junction Complex (EJC)"/>
</dbReference>
<dbReference type="Reactome" id="R-HSA-975957">
    <property type="pathway name" value="Nonsense Mediated Decay (NMD) enhanced by the Exon Junction Complex (EJC)"/>
</dbReference>
<dbReference type="SignaLink" id="P15170"/>
<dbReference type="SIGNOR" id="P15170"/>
<dbReference type="BioGRID-ORCS" id="2935">
    <property type="hits" value="786 hits in 1166 CRISPR screens"/>
</dbReference>
<dbReference type="CD-CODE" id="DEE660B4">
    <property type="entry name" value="Stress granule"/>
</dbReference>
<dbReference type="ChiTaRS" id="GSPT1">
    <property type="organism name" value="human"/>
</dbReference>
<dbReference type="EvolutionaryTrace" id="P15170"/>
<dbReference type="GeneWiki" id="GSPT1"/>
<dbReference type="GenomeRNAi" id="2935"/>
<dbReference type="Pharos" id="P15170">
    <property type="development level" value="Tbio"/>
</dbReference>
<dbReference type="PRO" id="PR:P15170"/>
<dbReference type="Proteomes" id="UP000005640">
    <property type="component" value="Chromosome 16"/>
</dbReference>
<dbReference type="RNAct" id="P15170">
    <property type="molecule type" value="protein"/>
</dbReference>
<dbReference type="Bgee" id="ENSG00000103342">
    <property type="expression patterns" value="Expressed in gingival epithelium and 209 other cell types or tissues"/>
</dbReference>
<dbReference type="ExpressionAtlas" id="P15170">
    <property type="expression patterns" value="baseline and differential"/>
</dbReference>
<dbReference type="GO" id="GO:0005737">
    <property type="term" value="C:cytoplasm"/>
    <property type="evidence" value="ECO:0000303"/>
    <property type="project" value="ComplexPortal"/>
</dbReference>
<dbReference type="GO" id="GO:0005829">
    <property type="term" value="C:cytosol"/>
    <property type="evidence" value="ECO:0000304"/>
    <property type="project" value="Reactome"/>
</dbReference>
<dbReference type="GO" id="GO:0022626">
    <property type="term" value="C:cytosolic ribosome"/>
    <property type="evidence" value="ECO:0000314"/>
    <property type="project" value="UniProt"/>
</dbReference>
<dbReference type="GO" id="GO:0018444">
    <property type="term" value="C:translation release factor complex"/>
    <property type="evidence" value="ECO:0000314"/>
    <property type="project" value="UniProtKB"/>
</dbReference>
<dbReference type="GO" id="GO:0005525">
    <property type="term" value="F:GTP binding"/>
    <property type="evidence" value="ECO:0007669"/>
    <property type="project" value="UniProtKB-KW"/>
</dbReference>
<dbReference type="GO" id="GO:0003924">
    <property type="term" value="F:GTPase activity"/>
    <property type="evidence" value="ECO:0000314"/>
    <property type="project" value="UniProtKB"/>
</dbReference>
<dbReference type="GO" id="GO:0003723">
    <property type="term" value="F:RNA binding"/>
    <property type="evidence" value="ECO:0007005"/>
    <property type="project" value="UniProtKB"/>
</dbReference>
<dbReference type="GO" id="GO:0003747">
    <property type="term" value="F:translation release factor activity"/>
    <property type="evidence" value="ECO:0000314"/>
    <property type="project" value="UniProtKB"/>
</dbReference>
<dbReference type="GO" id="GO:0000082">
    <property type="term" value="P:G1/S transition of mitotic cell cycle"/>
    <property type="evidence" value="ECO:0000304"/>
    <property type="project" value="UniProtKB"/>
</dbReference>
<dbReference type="GO" id="GO:0000184">
    <property type="term" value="P:nuclear-transcribed mRNA catabolic process, nonsense-mediated decay"/>
    <property type="evidence" value="ECO:0000304"/>
    <property type="project" value="UniProtKB"/>
</dbReference>
<dbReference type="GO" id="GO:0006479">
    <property type="term" value="P:protein methylation"/>
    <property type="evidence" value="ECO:0000314"/>
    <property type="project" value="MGI"/>
</dbReference>
<dbReference type="GO" id="GO:0006449">
    <property type="term" value="P:regulation of translational termination"/>
    <property type="evidence" value="ECO:0000315"/>
    <property type="project" value="UniProtKB"/>
</dbReference>
<dbReference type="GO" id="GO:0006412">
    <property type="term" value="P:translation"/>
    <property type="evidence" value="ECO:0000318"/>
    <property type="project" value="GO_Central"/>
</dbReference>
<dbReference type="GO" id="GO:0006415">
    <property type="term" value="P:translational termination"/>
    <property type="evidence" value="ECO:0000314"/>
    <property type="project" value="UniProtKB"/>
</dbReference>
<dbReference type="CDD" id="cd01883">
    <property type="entry name" value="EF1_alpha"/>
    <property type="match status" value="1"/>
</dbReference>
<dbReference type="CDD" id="cd03704">
    <property type="entry name" value="eRF3_C_III"/>
    <property type="match status" value="1"/>
</dbReference>
<dbReference type="CDD" id="cd04089">
    <property type="entry name" value="eRF3_II"/>
    <property type="match status" value="1"/>
</dbReference>
<dbReference type="FunFam" id="2.40.30.10:FF:000017">
    <property type="entry name" value="Eukaryotic peptide chain release factor GTP-binding subunit"/>
    <property type="match status" value="1"/>
</dbReference>
<dbReference type="FunFam" id="2.40.30.10:FF:000024">
    <property type="entry name" value="Eukaryotic peptide chain release factor GTP-binding subunit ERF3A"/>
    <property type="match status" value="1"/>
</dbReference>
<dbReference type="FunFam" id="3.40.50.300:FF:000270">
    <property type="entry name" value="Eukaryotic peptide chain release factor GTP-binding subunit ERF3A"/>
    <property type="match status" value="1"/>
</dbReference>
<dbReference type="Gene3D" id="3.40.50.300">
    <property type="entry name" value="P-loop containing nucleotide triphosphate hydrolases"/>
    <property type="match status" value="1"/>
</dbReference>
<dbReference type="Gene3D" id="2.40.30.10">
    <property type="entry name" value="Translation factors"/>
    <property type="match status" value="2"/>
</dbReference>
<dbReference type="InterPro" id="IPR004161">
    <property type="entry name" value="EFTu-like_2"/>
</dbReference>
<dbReference type="InterPro" id="IPR031157">
    <property type="entry name" value="G_TR_CS"/>
</dbReference>
<dbReference type="InterPro" id="IPR054696">
    <property type="entry name" value="GTP-eEF1A_C"/>
</dbReference>
<dbReference type="InterPro" id="IPR027417">
    <property type="entry name" value="P-loop_NTPase"/>
</dbReference>
<dbReference type="InterPro" id="IPR000795">
    <property type="entry name" value="T_Tr_GTP-bd_dom"/>
</dbReference>
<dbReference type="InterPro" id="IPR050100">
    <property type="entry name" value="TRAFAC_GTPase_members"/>
</dbReference>
<dbReference type="InterPro" id="IPR009000">
    <property type="entry name" value="Transl_B-barrel_sf"/>
</dbReference>
<dbReference type="InterPro" id="IPR009001">
    <property type="entry name" value="Transl_elong_EF1A/Init_IF2_C"/>
</dbReference>
<dbReference type="PANTHER" id="PTHR23115">
    <property type="entry name" value="TRANSLATION FACTOR"/>
    <property type="match status" value="1"/>
</dbReference>
<dbReference type="Pfam" id="PF22594">
    <property type="entry name" value="GTP-eEF1A_C"/>
    <property type="match status" value="1"/>
</dbReference>
<dbReference type="Pfam" id="PF00009">
    <property type="entry name" value="GTP_EFTU"/>
    <property type="match status" value="1"/>
</dbReference>
<dbReference type="Pfam" id="PF03144">
    <property type="entry name" value="GTP_EFTU_D2"/>
    <property type="match status" value="1"/>
</dbReference>
<dbReference type="PRINTS" id="PR00315">
    <property type="entry name" value="ELONGATNFCT"/>
</dbReference>
<dbReference type="SUPFAM" id="SSF50465">
    <property type="entry name" value="EF-Tu/eEF-1alpha/eIF2-gamma C-terminal domain"/>
    <property type="match status" value="1"/>
</dbReference>
<dbReference type="SUPFAM" id="SSF52540">
    <property type="entry name" value="P-loop containing nucleoside triphosphate hydrolases"/>
    <property type="match status" value="1"/>
</dbReference>
<dbReference type="SUPFAM" id="SSF50447">
    <property type="entry name" value="Translation proteins"/>
    <property type="match status" value="1"/>
</dbReference>
<dbReference type="PROSITE" id="PS00301">
    <property type="entry name" value="G_TR_1"/>
    <property type="match status" value="1"/>
</dbReference>
<dbReference type="PROSITE" id="PS51722">
    <property type="entry name" value="G_TR_2"/>
    <property type="match status" value="1"/>
</dbReference>